<keyword id="KW-0963">Cytoplasm</keyword>
<keyword id="KW-0238">DNA-binding</keyword>
<keyword id="KW-0275">Fatty acid biosynthesis</keyword>
<keyword id="KW-0276">Fatty acid metabolism</keyword>
<keyword id="KW-0444">Lipid biosynthesis</keyword>
<keyword id="KW-0443">Lipid metabolism</keyword>
<keyword id="KW-1185">Reference proteome</keyword>
<keyword id="KW-0678">Repressor</keyword>
<keyword id="KW-0804">Transcription</keyword>
<keyword id="KW-0805">Transcription regulation</keyword>
<gene>
    <name evidence="1" type="primary">fabR</name>
    <name type="ordered locus">Ecok1_39410</name>
    <name type="ORF">APECO1_2500</name>
</gene>
<name>FABR_ECOK1</name>
<dbReference type="EMBL" id="CP000468">
    <property type="protein sequence ID" value="ABJ03435.1"/>
    <property type="status" value="ALT_INIT"/>
    <property type="molecule type" value="Genomic_DNA"/>
</dbReference>
<dbReference type="SMR" id="A1AIE5"/>
<dbReference type="KEGG" id="ecv:APECO1_2500"/>
<dbReference type="HOGENOM" id="CLU_081861_0_0_6"/>
<dbReference type="Proteomes" id="UP000008216">
    <property type="component" value="Chromosome"/>
</dbReference>
<dbReference type="GO" id="GO:0005737">
    <property type="term" value="C:cytoplasm"/>
    <property type="evidence" value="ECO:0007669"/>
    <property type="project" value="UniProtKB-SubCell"/>
</dbReference>
<dbReference type="GO" id="GO:0003677">
    <property type="term" value="F:DNA binding"/>
    <property type="evidence" value="ECO:0007669"/>
    <property type="project" value="UniProtKB-KW"/>
</dbReference>
<dbReference type="GO" id="GO:0003700">
    <property type="term" value="F:DNA-binding transcription factor activity"/>
    <property type="evidence" value="ECO:0007669"/>
    <property type="project" value="UniProtKB-UniRule"/>
</dbReference>
<dbReference type="GO" id="GO:0006633">
    <property type="term" value="P:fatty acid biosynthetic process"/>
    <property type="evidence" value="ECO:0007669"/>
    <property type="project" value="UniProtKB-UniRule"/>
</dbReference>
<dbReference type="GO" id="GO:0045717">
    <property type="term" value="P:negative regulation of fatty acid biosynthetic process"/>
    <property type="evidence" value="ECO:0007669"/>
    <property type="project" value="UniProtKB-UniRule"/>
</dbReference>
<dbReference type="FunFam" id="1.10.10.60:FF:000034">
    <property type="entry name" value="HTH-type transcriptional repressor FabR"/>
    <property type="match status" value="1"/>
</dbReference>
<dbReference type="FunFam" id="1.10.357.10:FF:000001">
    <property type="entry name" value="HTH-type transcriptional repressor FabR"/>
    <property type="match status" value="1"/>
</dbReference>
<dbReference type="Gene3D" id="1.10.10.60">
    <property type="entry name" value="Homeodomain-like"/>
    <property type="match status" value="1"/>
</dbReference>
<dbReference type="Gene3D" id="1.10.357.10">
    <property type="entry name" value="Tetracycline Repressor, domain 2"/>
    <property type="match status" value="1"/>
</dbReference>
<dbReference type="HAMAP" id="MF_01190">
    <property type="entry name" value="HTH_type_FabR"/>
    <property type="match status" value="1"/>
</dbReference>
<dbReference type="InterPro" id="IPR054129">
    <property type="entry name" value="DesT_TetR_C"/>
</dbReference>
<dbReference type="InterPro" id="IPR009057">
    <property type="entry name" value="Homeodomain-like_sf"/>
</dbReference>
<dbReference type="InterPro" id="IPR001647">
    <property type="entry name" value="HTH_TetR"/>
</dbReference>
<dbReference type="InterPro" id="IPR050692">
    <property type="entry name" value="HTH_transcr_repressor_FabR"/>
</dbReference>
<dbReference type="InterPro" id="IPR023764">
    <property type="entry name" value="Tscrpt_reg_HTH_FabR"/>
</dbReference>
<dbReference type="NCBIfam" id="NF008402">
    <property type="entry name" value="PRK11202.1"/>
    <property type="match status" value="1"/>
</dbReference>
<dbReference type="PANTHER" id="PTHR47752">
    <property type="entry name" value="HTH-TYPE TRANSCRIPTIONAL REPRESSOR FABR"/>
    <property type="match status" value="1"/>
</dbReference>
<dbReference type="PANTHER" id="PTHR47752:SF1">
    <property type="entry name" value="HTH-TYPE TRANSCRIPTIONAL REPRESSOR FABR"/>
    <property type="match status" value="1"/>
</dbReference>
<dbReference type="Pfam" id="PF21943">
    <property type="entry name" value="TetR_C_46"/>
    <property type="match status" value="1"/>
</dbReference>
<dbReference type="Pfam" id="PF00440">
    <property type="entry name" value="TetR_N"/>
    <property type="match status" value="1"/>
</dbReference>
<dbReference type="SUPFAM" id="SSF46689">
    <property type="entry name" value="Homeodomain-like"/>
    <property type="match status" value="1"/>
</dbReference>
<dbReference type="PROSITE" id="PS50977">
    <property type="entry name" value="HTH_TETR_2"/>
    <property type="match status" value="1"/>
</dbReference>
<protein>
    <recommendedName>
        <fullName evidence="1">HTH-type transcriptional repressor FabR</fullName>
    </recommendedName>
</protein>
<comment type="function">
    <text evidence="1">Represses the transcription of fabB, involved in unsaturated fatty acid (UFA) biosynthesis. By controlling UFA production, FabR directly influences the physical properties of the membrane bilayer.</text>
</comment>
<comment type="subunit">
    <text evidence="1">Homodimer.</text>
</comment>
<comment type="subcellular location">
    <subcellularLocation>
        <location evidence="1">Cytoplasm</location>
    </subcellularLocation>
</comment>
<comment type="sequence caution" evidence="2">
    <conflict type="erroneous initiation">
        <sequence resource="EMBL-CDS" id="ABJ03435"/>
    </conflict>
</comment>
<organism>
    <name type="scientific">Escherichia coli O1:K1 / APEC</name>
    <dbReference type="NCBI Taxonomy" id="405955"/>
    <lineage>
        <taxon>Bacteria</taxon>
        <taxon>Pseudomonadati</taxon>
        <taxon>Pseudomonadota</taxon>
        <taxon>Gammaproteobacteria</taxon>
        <taxon>Enterobacterales</taxon>
        <taxon>Enterobacteriaceae</taxon>
        <taxon>Escherichia</taxon>
    </lineage>
</organism>
<feature type="chain" id="PRO_0000293567" description="HTH-type transcriptional repressor FabR">
    <location>
        <begin position="1"/>
        <end position="215"/>
    </location>
</feature>
<feature type="domain" description="HTH tetR-type" evidence="1">
    <location>
        <begin position="10"/>
        <end position="70"/>
    </location>
</feature>
<feature type="DNA-binding region" description="H-T-H motif" evidence="1">
    <location>
        <begin position="33"/>
        <end position="52"/>
    </location>
</feature>
<reference key="1">
    <citation type="journal article" date="2007" name="J. Bacteriol.">
        <title>The genome sequence of avian pathogenic Escherichia coli strain O1:K1:H7 shares strong similarities with human extraintestinal pathogenic E. coli genomes.</title>
        <authorList>
            <person name="Johnson T.J."/>
            <person name="Kariyawasam S."/>
            <person name="Wannemuehler Y."/>
            <person name="Mangiamele P."/>
            <person name="Johnson S.J."/>
            <person name="Doetkott C."/>
            <person name="Skyberg J.A."/>
            <person name="Lynne A.M."/>
            <person name="Johnson J.R."/>
            <person name="Nolan L.K."/>
        </authorList>
    </citation>
    <scope>NUCLEOTIDE SEQUENCE [LARGE SCALE GENOMIC DNA]</scope>
</reference>
<accession>A1AIE5</accession>
<proteinExistence type="inferred from homology"/>
<sequence>MGVRAQQKEKTRRSLVEAAFSQLSAERSFASLSLREVAREAGIAPTSFYRHFRDVDELGLTMVDESGLMLRQLMRQARQRIAKGGSVIRTSVSTFMEFIGNNPNAFRLLLRERSGTSAAFRAAVAREIQHFIAELADYLELENHMPRAFTEAQAEAMVTIVFSAGAEALDVGVEQRRQLEERLVLQLRMISKGAYYWYRREQEKTTIIPGNVKDE</sequence>
<evidence type="ECO:0000255" key="1">
    <source>
        <dbReference type="HAMAP-Rule" id="MF_01190"/>
    </source>
</evidence>
<evidence type="ECO:0000305" key="2"/>